<dbReference type="EC" id="3.6.5.3" evidence="2"/>
<dbReference type="EMBL" id="CP000143">
    <property type="protein sequence ID" value="ABA77846.1"/>
    <property type="molecule type" value="Genomic_DNA"/>
</dbReference>
<dbReference type="EMBL" id="CP000143">
    <property type="protein sequence ID" value="ABA77860.1"/>
    <property type="molecule type" value="Genomic_DNA"/>
</dbReference>
<dbReference type="RefSeq" id="YP_351747.1">
    <property type="nucleotide sequence ID" value="NC_007493.2"/>
</dbReference>
<dbReference type="RefSeq" id="YP_351761.1">
    <property type="nucleotide sequence ID" value="NC_007493.2"/>
</dbReference>
<dbReference type="SMR" id="Q3J5S4"/>
<dbReference type="STRING" id="272943.RSP_1707"/>
<dbReference type="MetOSite" id="Q3J5S4"/>
<dbReference type="EnsemblBacteria" id="ABA77846">
    <property type="protein sequence ID" value="ABA77846"/>
    <property type="gene ID" value="RSP_1707"/>
</dbReference>
<dbReference type="EnsemblBacteria" id="ABA77860">
    <property type="protein sequence ID" value="ABA77860"/>
    <property type="gene ID" value="RSP_1714"/>
</dbReference>
<dbReference type="KEGG" id="rsp:RSP_1707"/>
<dbReference type="KEGG" id="rsp:RSP_1714"/>
<dbReference type="PATRIC" id="fig|272943.9.peg.576"/>
<dbReference type="eggNOG" id="COG0050">
    <property type="taxonomic scope" value="Bacteria"/>
</dbReference>
<dbReference type="OrthoDB" id="9803139at2"/>
<dbReference type="PhylomeDB" id="Q3J5S4"/>
<dbReference type="Proteomes" id="UP000002703">
    <property type="component" value="Chromosome 1"/>
</dbReference>
<dbReference type="GO" id="GO:0005737">
    <property type="term" value="C:cytoplasm"/>
    <property type="evidence" value="ECO:0007669"/>
    <property type="project" value="UniProtKB-SubCell"/>
</dbReference>
<dbReference type="GO" id="GO:0005525">
    <property type="term" value="F:GTP binding"/>
    <property type="evidence" value="ECO:0007669"/>
    <property type="project" value="UniProtKB-UniRule"/>
</dbReference>
<dbReference type="GO" id="GO:0003924">
    <property type="term" value="F:GTPase activity"/>
    <property type="evidence" value="ECO:0007669"/>
    <property type="project" value="InterPro"/>
</dbReference>
<dbReference type="GO" id="GO:0097216">
    <property type="term" value="F:guanosine tetraphosphate binding"/>
    <property type="evidence" value="ECO:0007669"/>
    <property type="project" value="UniProtKB-ARBA"/>
</dbReference>
<dbReference type="GO" id="GO:0003746">
    <property type="term" value="F:translation elongation factor activity"/>
    <property type="evidence" value="ECO:0007669"/>
    <property type="project" value="UniProtKB-UniRule"/>
</dbReference>
<dbReference type="CDD" id="cd01884">
    <property type="entry name" value="EF_Tu"/>
    <property type="match status" value="1"/>
</dbReference>
<dbReference type="CDD" id="cd03697">
    <property type="entry name" value="EFTU_II"/>
    <property type="match status" value="1"/>
</dbReference>
<dbReference type="CDD" id="cd03707">
    <property type="entry name" value="EFTU_III"/>
    <property type="match status" value="1"/>
</dbReference>
<dbReference type="FunFam" id="2.40.30.10:FF:000001">
    <property type="entry name" value="Elongation factor Tu"/>
    <property type="match status" value="1"/>
</dbReference>
<dbReference type="FunFam" id="3.40.50.300:FF:000003">
    <property type="entry name" value="Elongation factor Tu"/>
    <property type="match status" value="1"/>
</dbReference>
<dbReference type="Gene3D" id="3.40.50.300">
    <property type="entry name" value="P-loop containing nucleotide triphosphate hydrolases"/>
    <property type="match status" value="1"/>
</dbReference>
<dbReference type="Gene3D" id="2.40.30.10">
    <property type="entry name" value="Translation factors"/>
    <property type="match status" value="2"/>
</dbReference>
<dbReference type="HAMAP" id="MF_00118_B">
    <property type="entry name" value="EF_Tu_B"/>
    <property type="match status" value="1"/>
</dbReference>
<dbReference type="InterPro" id="IPR041709">
    <property type="entry name" value="EF-Tu_GTP-bd"/>
</dbReference>
<dbReference type="InterPro" id="IPR050055">
    <property type="entry name" value="EF-Tu_GTPase"/>
</dbReference>
<dbReference type="InterPro" id="IPR004161">
    <property type="entry name" value="EFTu-like_2"/>
</dbReference>
<dbReference type="InterPro" id="IPR033720">
    <property type="entry name" value="EFTU_2"/>
</dbReference>
<dbReference type="InterPro" id="IPR031157">
    <property type="entry name" value="G_TR_CS"/>
</dbReference>
<dbReference type="InterPro" id="IPR027417">
    <property type="entry name" value="P-loop_NTPase"/>
</dbReference>
<dbReference type="InterPro" id="IPR005225">
    <property type="entry name" value="Small_GTP-bd"/>
</dbReference>
<dbReference type="InterPro" id="IPR000795">
    <property type="entry name" value="T_Tr_GTP-bd_dom"/>
</dbReference>
<dbReference type="InterPro" id="IPR009000">
    <property type="entry name" value="Transl_B-barrel_sf"/>
</dbReference>
<dbReference type="InterPro" id="IPR009001">
    <property type="entry name" value="Transl_elong_EF1A/Init_IF2_C"/>
</dbReference>
<dbReference type="InterPro" id="IPR004541">
    <property type="entry name" value="Transl_elong_EFTu/EF1A_bac/org"/>
</dbReference>
<dbReference type="InterPro" id="IPR004160">
    <property type="entry name" value="Transl_elong_EFTu/EF1A_C"/>
</dbReference>
<dbReference type="NCBIfam" id="TIGR00485">
    <property type="entry name" value="EF-Tu"/>
    <property type="match status" value="1"/>
</dbReference>
<dbReference type="NCBIfam" id="NF000766">
    <property type="entry name" value="PRK00049.1"/>
    <property type="match status" value="1"/>
</dbReference>
<dbReference type="NCBIfam" id="NF009372">
    <property type="entry name" value="PRK12735.1"/>
    <property type="match status" value="1"/>
</dbReference>
<dbReference type="NCBIfam" id="NF009373">
    <property type="entry name" value="PRK12736.1"/>
    <property type="match status" value="1"/>
</dbReference>
<dbReference type="NCBIfam" id="TIGR00231">
    <property type="entry name" value="small_GTP"/>
    <property type="match status" value="1"/>
</dbReference>
<dbReference type="PANTHER" id="PTHR43721:SF22">
    <property type="entry name" value="ELONGATION FACTOR TU, MITOCHONDRIAL"/>
    <property type="match status" value="1"/>
</dbReference>
<dbReference type="PANTHER" id="PTHR43721">
    <property type="entry name" value="ELONGATION FACTOR TU-RELATED"/>
    <property type="match status" value="1"/>
</dbReference>
<dbReference type="Pfam" id="PF00009">
    <property type="entry name" value="GTP_EFTU"/>
    <property type="match status" value="1"/>
</dbReference>
<dbReference type="Pfam" id="PF03144">
    <property type="entry name" value="GTP_EFTU_D2"/>
    <property type="match status" value="1"/>
</dbReference>
<dbReference type="Pfam" id="PF03143">
    <property type="entry name" value="GTP_EFTU_D3"/>
    <property type="match status" value="1"/>
</dbReference>
<dbReference type="PRINTS" id="PR00315">
    <property type="entry name" value="ELONGATNFCT"/>
</dbReference>
<dbReference type="SUPFAM" id="SSF50465">
    <property type="entry name" value="EF-Tu/eEF-1alpha/eIF2-gamma C-terminal domain"/>
    <property type="match status" value="1"/>
</dbReference>
<dbReference type="SUPFAM" id="SSF52540">
    <property type="entry name" value="P-loop containing nucleoside triphosphate hydrolases"/>
    <property type="match status" value="1"/>
</dbReference>
<dbReference type="SUPFAM" id="SSF50447">
    <property type="entry name" value="Translation proteins"/>
    <property type="match status" value="1"/>
</dbReference>
<dbReference type="PROSITE" id="PS00301">
    <property type="entry name" value="G_TR_1"/>
    <property type="match status" value="1"/>
</dbReference>
<dbReference type="PROSITE" id="PS51722">
    <property type="entry name" value="G_TR_2"/>
    <property type="match status" value="1"/>
</dbReference>
<sequence length="391" mass="42874">MAKAKFERNKPHVNIGTIGHVDHGKTTLTAAITKYFGEFRAYDQIDGAPEERARGITISTAHVEYESDTRHYAHVDCPGHADYVKNMITGAAQMDGAILVVNAADGPMPQTREHILLGRQVGIPYMVVYMNKVDQVDDPELIELVEMEIRELLSSYDYPGDDIPIIKGSALAAMNGTDKEIGEDSIRALIAAVDEYIPTPARAVDQPFLMPVEDVFSISGRGTVATGRIERGVVKVGEELEIVGIRPSKKTVCTGVEMFRKLLDQGEAGDNVGLLLRGVDRDGIERGQVLCKPGSVKPHTKFEAEAYILTKEEGGRHTPFFANYRPQFYFRTTDVTGTVQLPEGTEMVMPGDNLKFNVELIAPIAMEEKLRFAIREGGRTVGAGVVSKIIA</sequence>
<organism>
    <name type="scientific">Cereibacter sphaeroides (strain ATCC 17023 / DSM 158 / JCM 6121 / CCUG 31486 / LMG 2827 / NBRC 12203 / NCIMB 8253 / ATH 2.4.1.)</name>
    <name type="common">Rhodobacter sphaeroides</name>
    <dbReference type="NCBI Taxonomy" id="272943"/>
    <lineage>
        <taxon>Bacteria</taxon>
        <taxon>Pseudomonadati</taxon>
        <taxon>Pseudomonadota</taxon>
        <taxon>Alphaproteobacteria</taxon>
        <taxon>Rhodobacterales</taxon>
        <taxon>Paracoccaceae</taxon>
        <taxon>Cereibacter</taxon>
    </lineage>
</organism>
<gene>
    <name evidence="2" type="primary">tuf1</name>
    <name type="synonym">tufA</name>
    <name type="ordered locus">RHOS4_02780</name>
    <name type="ORF">RSP_1707</name>
</gene>
<gene>
    <name evidence="2" type="primary">tuf2</name>
    <name type="synonym">tufA</name>
    <name type="ordered locus">RHOS4_02920</name>
    <name type="ORF">RSP_1714</name>
</gene>
<proteinExistence type="inferred from homology"/>
<name>EFTU_CERS4</name>
<evidence type="ECO:0000250" key="1"/>
<evidence type="ECO:0000255" key="2">
    <source>
        <dbReference type="HAMAP-Rule" id="MF_00118"/>
    </source>
</evidence>
<accession>Q3J5S4</accession>
<protein>
    <recommendedName>
        <fullName evidence="2">Elongation factor Tu</fullName>
        <shortName evidence="2">EF-Tu</shortName>
        <ecNumber evidence="2">3.6.5.3</ecNumber>
    </recommendedName>
</protein>
<keyword id="KW-0963">Cytoplasm</keyword>
<keyword id="KW-0251">Elongation factor</keyword>
<keyword id="KW-0342">GTP-binding</keyword>
<keyword id="KW-0378">Hydrolase</keyword>
<keyword id="KW-0460">Magnesium</keyword>
<keyword id="KW-0479">Metal-binding</keyword>
<keyword id="KW-0547">Nucleotide-binding</keyword>
<keyword id="KW-0648">Protein biosynthesis</keyword>
<keyword id="KW-1185">Reference proteome</keyword>
<feature type="chain" id="PRO_0000337489" description="Elongation factor Tu">
    <location>
        <begin position="1"/>
        <end position="391"/>
    </location>
</feature>
<feature type="domain" description="tr-type G">
    <location>
        <begin position="10"/>
        <end position="201"/>
    </location>
</feature>
<feature type="region of interest" description="G1" evidence="1">
    <location>
        <begin position="19"/>
        <end position="26"/>
    </location>
</feature>
<feature type="region of interest" description="G2" evidence="1">
    <location>
        <begin position="55"/>
        <end position="59"/>
    </location>
</feature>
<feature type="region of interest" description="G3" evidence="1">
    <location>
        <begin position="76"/>
        <end position="79"/>
    </location>
</feature>
<feature type="region of interest" description="G4" evidence="1">
    <location>
        <begin position="131"/>
        <end position="134"/>
    </location>
</feature>
<feature type="region of interest" description="G5" evidence="1">
    <location>
        <begin position="169"/>
        <end position="171"/>
    </location>
</feature>
<feature type="binding site" evidence="2">
    <location>
        <begin position="19"/>
        <end position="26"/>
    </location>
    <ligand>
        <name>GTP</name>
        <dbReference type="ChEBI" id="CHEBI:37565"/>
    </ligand>
</feature>
<feature type="binding site" evidence="2">
    <location>
        <position position="26"/>
    </location>
    <ligand>
        <name>Mg(2+)</name>
        <dbReference type="ChEBI" id="CHEBI:18420"/>
    </ligand>
</feature>
<feature type="binding site" evidence="2">
    <location>
        <begin position="76"/>
        <end position="80"/>
    </location>
    <ligand>
        <name>GTP</name>
        <dbReference type="ChEBI" id="CHEBI:37565"/>
    </ligand>
</feature>
<feature type="binding site" evidence="2">
    <location>
        <begin position="131"/>
        <end position="134"/>
    </location>
    <ligand>
        <name>GTP</name>
        <dbReference type="ChEBI" id="CHEBI:37565"/>
    </ligand>
</feature>
<comment type="function">
    <text evidence="2">GTP hydrolase that promotes the GTP-dependent binding of aminoacyl-tRNA to the A-site of ribosomes during protein biosynthesis.</text>
</comment>
<comment type="catalytic activity">
    <reaction evidence="2">
        <text>GTP + H2O = GDP + phosphate + H(+)</text>
        <dbReference type="Rhea" id="RHEA:19669"/>
        <dbReference type="ChEBI" id="CHEBI:15377"/>
        <dbReference type="ChEBI" id="CHEBI:15378"/>
        <dbReference type="ChEBI" id="CHEBI:37565"/>
        <dbReference type="ChEBI" id="CHEBI:43474"/>
        <dbReference type="ChEBI" id="CHEBI:58189"/>
        <dbReference type="EC" id="3.6.5.3"/>
    </reaction>
    <physiologicalReaction direction="left-to-right" evidence="2">
        <dbReference type="Rhea" id="RHEA:19670"/>
    </physiologicalReaction>
</comment>
<comment type="subunit">
    <text evidence="2">Monomer.</text>
</comment>
<comment type="subcellular location">
    <subcellularLocation>
        <location evidence="2">Cytoplasm</location>
    </subcellularLocation>
</comment>
<comment type="similarity">
    <text evidence="2">Belongs to the TRAFAC class translation factor GTPase superfamily. Classic translation factor GTPase family. EF-Tu/EF-1A subfamily.</text>
</comment>
<reference key="1">
    <citation type="submission" date="2005-09" db="EMBL/GenBank/DDBJ databases">
        <title>Complete sequence of chromosome 1 of Rhodobacter sphaeroides 2.4.1.</title>
        <authorList>
            <person name="Copeland A."/>
            <person name="Lucas S."/>
            <person name="Lapidus A."/>
            <person name="Barry K."/>
            <person name="Detter J.C."/>
            <person name="Glavina T."/>
            <person name="Hammon N."/>
            <person name="Israni S."/>
            <person name="Pitluck S."/>
            <person name="Richardson P."/>
            <person name="Mackenzie C."/>
            <person name="Choudhary M."/>
            <person name="Larimer F."/>
            <person name="Hauser L.J."/>
            <person name="Land M."/>
            <person name="Donohue T.J."/>
            <person name="Kaplan S."/>
        </authorList>
    </citation>
    <scope>NUCLEOTIDE SEQUENCE [LARGE SCALE GENOMIC DNA]</scope>
    <source>
        <strain>ATCC 17023 / DSM 158 / JCM 6121 / CCUG 31486 / LMG 2827 / NBRC 12203 / NCIMB 8253 / ATH 2.4.1.</strain>
    </source>
</reference>